<name>P20D1_ARTBC</name>
<accession>D4AXX2</accession>
<evidence type="ECO:0000250" key="1"/>
<evidence type="ECO:0000255" key="2"/>
<evidence type="ECO:0000305" key="3"/>
<organism>
    <name type="scientific">Arthroderma benhamiae (strain ATCC MYA-4681 / CBS 112371)</name>
    <name type="common">Trichophyton mentagrophytes</name>
    <dbReference type="NCBI Taxonomy" id="663331"/>
    <lineage>
        <taxon>Eukaryota</taxon>
        <taxon>Fungi</taxon>
        <taxon>Dikarya</taxon>
        <taxon>Ascomycota</taxon>
        <taxon>Pezizomycotina</taxon>
        <taxon>Eurotiomycetes</taxon>
        <taxon>Eurotiomycetidae</taxon>
        <taxon>Onygenales</taxon>
        <taxon>Arthrodermataceae</taxon>
        <taxon>Trichophyton</taxon>
    </lineage>
</organism>
<comment type="cofactor">
    <cofactor evidence="1">
        <name>Zn(2+)</name>
        <dbReference type="ChEBI" id="CHEBI:29105"/>
    </cofactor>
    <text evidence="1">Binds 2 Zn(2+) ions per subunit.</text>
</comment>
<comment type="subcellular location">
    <subcellularLocation>
        <location evidence="3">Secreted</location>
    </subcellularLocation>
</comment>
<comment type="similarity">
    <text evidence="3">Belongs to the peptidase M20A family.</text>
</comment>
<protein>
    <recommendedName>
        <fullName>Probable carboxypeptidase ARB_01041</fullName>
        <ecNumber>3.4.17.-</ecNumber>
    </recommendedName>
    <alternativeName>
        <fullName>Peptidase M20 domain-containing protein ARB_01041</fullName>
    </alternativeName>
</protein>
<keyword id="KW-0325">Glycoprotein</keyword>
<keyword id="KW-0378">Hydrolase</keyword>
<keyword id="KW-0479">Metal-binding</keyword>
<keyword id="KW-0645">Protease</keyword>
<keyword id="KW-1185">Reference proteome</keyword>
<keyword id="KW-0964">Secreted</keyword>
<keyword id="KW-0732">Signal</keyword>
<keyword id="KW-0862">Zinc</keyword>
<dbReference type="EC" id="3.4.17.-"/>
<dbReference type="EMBL" id="ABSU01000017">
    <property type="protein sequence ID" value="EFE32150.1"/>
    <property type="molecule type" value="Genomic_DNA"/>
</dbReference>
<dbReference type="RefSeq" id="XP_003012790.1">
    <property type="nucleotide sequence ID" value="XM_003012744.1"/>
</dbReference>
<dbReference type="SMR" id="D4AXX2"/>
<dbReference type="STRING" id="663331.D4AXX2"/>
<dbReference type="GeneID" id="9522868"/>
<dbReference type="KEGG" id="abe:ARB_01041"/>
<dbReference type="eggNOG" id="KOG2275">
    <property type="taxonomic scope" value="Eukaryota"/>
</dbReference>
<dbReference type="HOGENOM" id="CLU_021802_3_0_1"/>
<dbReference type="OMA" id="RLHKGVM"/>
<dbReference type="OrthoDB" id="3064516at2759"/>
<dbReference type="Proteomes" id="UP000008866">
    <property type="component" value="Unassembled WGS sequence"/>
</dbReference>
<dbReference type="GO" id="GO:0005576">
    <property type="term" value="C:extracellular region"/>
    <property type="evidence" value="ECO:0007669"/>
    <property type="project" value="UniProtKB-SubCell"/>
</dbReference>
<dbReference type="GO" id="GO:0046872">
    <property type="term" value="F:metal ion binding"/>
    <property type="evidence" value="ECO:0007669"/>
    <property type="project" value="UniProtKB-KW"/>
</dbReference>
<dbReference type="GO" id="GO:0008233">
    <property type="term" value="F:peptidase activity"/>
    <property type="evidence" value="ECO:0007669"/>
    <property type="project" value="UniProtKB-KW"/>
</dbReference>
<dbReference type="GO" id="GO:0006508">
    <property type="term" value="P:proteolysis"/>
    <property type="evidence" value="ECO:0007669"/>
    <property type="project" value="UniProtKB-KW"/>
</dbReference>
<dbReference type="CDD" id="cd05652">
    <property type="entry name" value="M20_ArgE_DapE-like_fungal"/>
    <property type="match status" value="1"/>
</dbReference>
<dbReference type="Gene3D" id="3.30.70.360">
    <property type="match status" value="1"/>
</dbReference>
<dbReference type="Gene3D" id="3.40.630.10">
    <property type="entry name" value="Zn peptidases"/>
    <property type="match status" value="1"/>
</dbReference>
<dbReference type="InterPro" id="IPR036264">
    <property type="entry name" value="Bact_exopeptidase_dim_dom"/>
</dbReference>
<dbReference type="InterPro" id="IPR002933">
    <property type="entry name" value="Peptidase_M20"/>
</dbReference>
<dbReference type="InterPro" id="IPR011650">
    <property type="entry name" value="Peptidase_M20_dimer"/>
</dbReference>
<dbReference type="InterPro" id="IPR050072">
    <property type="entry name" value="Peptidase_M20A"/>
</dbReference>
<dbReference type="PANTHER" id="PTHR43808">
    <property type="entry name" value="ACETYLORNITHINE DEACETYLASE"/>
    <property type="match status" value="1"/>
</dbReference>
<dbReference type="PANTHER" id="PTHR43808:SF8">
    <property type="entry name" value="PEPTIDASE M20 DIMERISATION DOMAIN-CONTAINING PROTEIN"/>
    <property type="match status" value="1"/>
</dbReference>
<dbReference type="Pfam" id="PF07687">
    <property type="entry name" value="M20_dimer"/>
    <property type="match status" value="1"/>
</dbReference>
<dbReference type="Pfam" id="PF01546">
    <property type="entry name" value="Peptidase_M20"/>
    <property type="match status" value="1"/>
</dbReference>
<dbReference type="SUPFAM" id="SSF55031">
    <property type="entry name" value="Bacterial exopeptidase dimerisation domain"/>
    <property type="match status" value="1"/>
</dbReference>
<dbReference type="SUPFAM" id="SSF53187">
    <property type="entry name" value="Zn-dependent exopeptidases"/>
    <property type="match status" value="1"/>
</dbReference>
<reference key="1">
    <citation type="journal article" date="2011" name="Genome Biol.">
        <title>Comparative and functional genomics provide insights into the pathogenicity of dermatophytic fungi.</title>
        <authorList>
            <person name="Burmester A."/>
            <person name="Shelest E."/>
            <person name="Gloeckner G."/>
            <person name="Heddergott C."/>
            <person name="Schindler S."/>
            <person name="Staib P."/>
            <person name="Heidel A."/>
            <person name="Felder M."/>
            <person name="Petzold A."/>
            <person name="Szafranski K."/>
            <person name="Feuermann M."/>
            <person name="Pedruzzi I."/>
            <person name="Priebe S."/>
            <person name="Groth M."/>
            <person name="Winkler R."/>
            <person name="Li W."/>
            <person name="Kniemeyer O."/>
            <person name="Schroeckh V."/>
            <person name="Hertweck C."/>
            <person name="Hube B."/>
            <person name="White T.C."/>
            <person name="Platzer M."/>
            <person name="Guthke R."/>
            <person name="Heitman J."/>
            <person name="Woestemeyer J."/>
            <person name="Zipfel P.F."/>
            <person name="Monod M."/>
            <person name="Brakhage A.A."/>
        </authorList>
    </citation>
    <scope>NUCLEOTIDE SEQUENCE [LARGE SCALE GENOMIC DNA]</scope>
    <source>
        <strain>ATCC MYA-4681 / CBS 112371</strain>
    </source>
</reference>
<sequence length="460" mass="49822">MQKTYIWALVSLLASSLVDARSAVFDQTPLDIGGSDDSFDSIARIDPNNNDLLKSEMDKVIASSELLSLHRALVEIKSISDNEQAVGGFLMDYLYSKNFTVEKQYVDYDDPTGKPIRSNRRFNIYAYPGNSASPGIILTSHIDTVPPFIPYSLSHPESASFKRDDILISGRGTVDDKASVACQVIAAMDHLEKHPDIPIGLLFVVSEEVGGRGMSTFSNSRLNSGTYHTIIFGEPTERALVAGHKGMVSFTIRVHGKPAHSGYPWLGRSAVSEMLPILTEVDRLGDIPVSQGGLPSSEKYGRTTLNIGFMSGGVAANVVAEEAVANVAVRLAAGNPEDAKDIIFRAIRNAATKHRKDATVVISNGLERPKGDIEVIFGLEAYGVVDIDADVDGFNVTTVNYGTDVPHWKIYGDNVKRYLYGPGTIFVAHGKNEALTVGELEAGLEGYKTLVAKAAERERS</sequence>
<proteinExistence type="inferred from homology"/>
<gene>
    <name type="ORF">ARB_01041</name>
</gene>
<feature type="signal peptide" evidence="2">
    <location>
        <begin position="1"/>
        <end position="22"/>
    </location>
</feature>
<feature type="chain" id="PRO_0000411224" description="Probable carboxypeptidase ARB_01041">
    <location>
        <begin position="23"/>
        <end position="460"/>
    </location>
</feature>
<feature type="active site" description="Proton acceptor" evidence="1">
    <location>
        <position position="207"/>
    </location>
</feature>
<feature type="binding site" evidence="1">
    <location>
        <position position="175"/>
    </location>
    <ligand>
        <name>Zn(2+)</name>
        <dbReference type="ChEBI" id="CHEBI:29105"/>
        <label>1</label>
    </ligand>
</feature>
<feature type="binding site" evidence="1">
    <location>
        <position position="175"/>
    </location>
    <ligand>
        <name>Zn(2+)</name>
        <dbReference type="ChEBI" id="CHEBI:29105"/>
        <label>2</label>
    </ligand>
</feature>
<feature type="binding site" evidence="1">
    <location>
        <position position="208"/>
    </location>
    <ligand>
        <name>Zn(2+)</name>
        <dbReference type="ChEBI" id="CHEBI:29105"/>
        <label>1</label>
    </ligand>
</feature>
<feature type="glycosylation site" description="N-linked (GlcNAc...) asparagine" evidence="2">
    <location>
        <position position="98"/>
    </location>
</feature>
<feature type="glycosylation site" description="N-linked (GlcNAc...) asparagine" evidence="2">
    <location>
        <position position="395"/>
    </location>
</feature>